<organism>
    <name type="scientific">Pseudomonas aeruginosa (strain ATCC 15692 / DSM 22644 / CIP 104116 / JCM 14847 / LMG 12228 / 1C / PRS 101 / PAO1)</name>
    <dbReference type="NCBI Taxonomy" id="208964"/>
    <lineage>
        <taxon>Bacteria</taxon>
        <taxon>Pseudomonadati</taxon>
        <taxon>Pseudomonadota</taxon>
        <taxon>Gammaproteobacteria</taxon>
        <taxon>Pseudomonadales</taxon>
        <taxon>Pseudomonadaceae</taxon>
        <taxon>Pseudomonas</taxon>
    </lineage>
</organism>
<name>LEUD_PSEAE</name>
<feature type="chain" id="PRO_0000141857" description="3-isopropylmalate dehydratase small subunit">
    <location>
        <begin position="1"/>
        <end position="212"/>
    </location>
</feature>
<comment type="function">
    <text evidence="1">Catalyzes the isomerization between 2-isopropylmalate and 3-isopropylmalate, via the formation of 2-isopropylmaleate.</text>
</comment>
<comment type="catalytic activity">
    <reaction evidence="1">
        <text>(2R,3S)-3-isopropylmalate = (2S)-2-isopropylmalate</text>
        <dbReference type="Rhea" id="RHEA:32287"/>
        <dbReference type="ChEBI" id="CHEBI:1178"/>
        <dbReference type="ChEBI" id="CHEBI:35121"/>
        <dbReference type="EC" id="4.2.1.33"/>
    </reaction>
</comment>
<comment type="pathway">
    <text evidence="1">Amino-acid biosynthesis; L-leucine biosynthesis; L-leucine from 3-methyl-2-oxobutanoate: step 2/4.</text>
</comment>
<comment type="subunit">
    <text evidence="1">Heterodimer of LeuC and LeuD.</text>
</comment>
<comment type="similarity">
    <text evidence="1">Belongs to the LeuD family. LeuD type 1 subfamily.</text>
</comment>
<evidence type="ECO:0000255" key="1">
    <source>
        <dbReference type="HAMAP-Rule" id="MF_01031"/>
    </source>
</evidence>
<proteinExistence type="inferred from homology"/>
<dbReference type="EC" id="4.2.1.33" evidence="1"/>
<dbReference type="EMBL" id="AE004091">
    <property type="protein sequence ID" value="AAG06508.1"/>
    <property type="molecule type" value="Genomic_DNA"/>
</dbReference>
<dbReference type="PIR" id="F83255">
    <property type="entry name" value="F83255"/>
</dbReference>
<dbReference type="RefSeq" id="NP_251810.1">
    <property type="nucleotide sequence ID" value="NC_002516.2"/>
</dbReference>
<dbReference type="RefSeq" id="WP_003091398.1">
    <property type="nucleotide sequence ID" value="NZ_QZGE01000023.1"/>
</dbReference>
<dbReference type="SMR" id="Q9HZA4"/>
<dbReference type="FunCoup" id="Q9HZA4">
    <property type="interactions" value="649"/>
</dbReference>
<dbReference type="STRING" id="208964.PA3120"/>
<dbReference type="PaxDb" id="208964-PA3120"/>
<dbReference type="GeneID" id="882818"/>
<dbReference type="KEGG" id="pae:PA3120"/>
<dbReference type="PATRIC" id="fig|208964.12.peg.3272"/>
<dbReference type="PseudoCAP" id="PA3120"/>
<dbReference type="HOGENOM" id="CLU_081378_0_3_6"/>
<dbReference type="InParanoid" id="Q9HZA4"/>
<dbReference type="OrthoDB" id="9777465at2"/>
<dbReference type="PhylomeDB" id="Q9HZA4"/>
<dbReference type="BioCyc" id="PAER208964:G1FZ6-3176-MONOMER"/>
<dbReference type="UniPathway" id="UPA00048">
    <property type="reaction ID" value="UER00071"/>
</dbReference>
<dbReference type="Proteomes" id="UP000002438">
    <property type="component" value="Chromosome"/>
</dbReference>
<dbReference type="GO" id="GO:0009316">
    <property type="term" value="C:3-isopropylmalate dehydratase complex"/>
    <property type="evidence" value="ECO:0007669"/>
    <property type="project" value="InterPro"/>
</dbReference>
<dbReference type="GO" id="GO:0003861">
    <property type="term" value="F:3-isopropylmalate dehydratase activity"/>
    <property type="evidence" value="ECO:0007669"/>
    <property type="project" value="UniProtKB-UniRule"/>
</dbReference>
<dbReference type="GO" id="GO:0009098">
    <property type="term" value="P:L-leucine biosynthetic process"/>
    <property type="evidence" value="ECO:0007669"/>
    <property type="project" value="UniProtKB-UniRule"/>
</dbReference>
<dbReference type="CDD" id="cd01577">
    <property type="entry name" value="IPMI_Swivel"/>
    <property type="match status" value="1"/>
</dbReference>
<dbReference type="FunFam" id="3.20.19.10:FF:000003">
    <property type="entry name" value="3-isopropylmalate dehydratase small subunit"/>
    <property type="match status" value="1"/>
</dbReference>
<dbReference type="Gene3D" id="3.20.19.10">
    <property type="entry name" value="Aconitase, domain 4"/>
    <property type="match status" value="1"/>
</dbReference>
<dbReference type="HAMAP" id="MF_01031">
    <property type="entry name" value="LeuD_type1"/>
    <property type="match status" value="1"/>
</dbReference>
<dbReference type="InterPro" id="IPR004431">
    <property type="entry name" value="3-IsopropMal_deHydase_ssu"/>
</dbReference>
<dbReference type="InterPro" id="IPR015928">
    <property type="entry name" value="Aconitase/3IPM_dehydase_swvl"/>
</dbReference>
<dbReference type="InterPro" id="IPR000573">
    <property type="entry name" value="AconitaseA/IPMdHydase_ssu_swvl"/>
</dbReference>
<dbReference type="InterPro" id="IPR033940">
    <property type="entry name" value="IPMI_Swivel"/>
</dbReference>
<dbReference type="InterPro" id="IPR050075">
    <property type="entry name" value="LeuD"/>
</dbReference>
<dbReference type="NCBIfam" id="TIGR00171">
    <property type="entry name" value="leuD"/>
    <property type="match status" value="1"/>
</dbReference>
<dbReference type="NCBIfam" id="NF002458">
    <property type="entry name" value="PRK01641.1"/>
    <property type="match status" value="1"/>
</dbReference>
<dbReference type="PANTHER" id="PTHR43345:SF5">
    <property type="entry name" value="3-ISOPROPYLMALATE DEHYDRATASE SMALL SUBUNIT"/>
    <property type="match status" value="1"/>
</dbReference>
<dbReference type="PANTHER" id="PTHR43345">
    <property type="entry name" value="3-ISOPROPYLMALATE DEHYDRATASE SMALL SUBUNIT 2-RELATED-RELATED"/>
    <property type="match status" value="1"/>
</dbReference>
<dbReference type="Pfam" id="PF00694">
    <property type="entry name" value="Aconitase_C"/>
    <property type="match status" value="1"/>
</dbReference>
<dbReference type="SUPFAM" id="SSF52016">
    <property type="entry name" value="LeuD/IlvD-like"/>
    <property type="match status" value="1"/>
</dbReference>
<protein>
    <recommendedName>
        <fullName evidence="1">3-isopropylmalate dehydratase small subunit</fullName>
        <ecNumber evidence="1">4.2.1.33</ecNumber>
    </recommendedName>
    <alternativeName>
        <fullName evidence="1">Alpha-IPM isomerase</fullName>
        <shortName evidence="1">IPMI</shortName>
    </alternativeName>
    <alternativeName>
        <fullName evidence="1">Isopropylmalate isomerase</fullName>
    </alternativeName>
</protein>
<sequence length="212" mass="24011">MKPYTQTTGLVAPLDRANVDTDQIIPKQFLKSIKRTGFGPNLFDEWRYLDVGQPGQDNSKRPLNPDFVLNQPRYQGASVLLARENFGCGSSREHAPWALDEYGFRTVIAPSYADIFFNNSFKNGLLPIILPEAEVDELFRQVEANEGYQLSIDLAAQTVTRPDGKVLGFEVDPFRKHCLLNGLDDIGLTLQDADAIRAFEDGYRQQQPWLFR</sequence>
<gene>
    <name evidence="1" type="primary">leuD</name>
    <name type="ordered locus">PA3120</name>
</gene>
<accession>Q9HZA4</accession>
<keyword id="KW-0028">Amino-acid biosynthesis</keyword>
<keyword id="KW-0100">Branched-chain amino acid biosynthesis</keyword>
<keyword id="KW-0432">Leucine biosynthesis</keyword>
<keyword id="KW-0456">Lyase</keyword>
<keyword id="KW-1185">Reference proteome</keyword>
<reference key="1">
    <citation type="journal article" date="2000" name="Nature">
        <title>Complete genome sequence of Pseudomonas aeruginosa PAO1, an opportunistic pathogen.</title>
        <authorList>
            <person name="Stover C.K."/>
            <person name="Pham X.-Q.T."/>
            <person name="Erwin A.L."/>
            <person name="Mizoguchi S.D."/>
            <person name="Warrener P."/>
            <person name="Hickey M.J."/>
            <person name="Brinkman F.S.L."/>
            <person name="Hufnagle W.O."/>
            <person name="Kowalik D.J."/>
            <person name="Lagrou M."/>
            <person name="Garber R.L."/>
            <person name="Goltry L."/>
            <person name="Tolentino E."/>
            <person name="Westbrock-Wadman S."/>
            <person name="Yuan Y."/>
            <person name="Brody L.L."/>
            <person name="Coulter S.N."/>
            <person name="Folger K.R."/>
            <person name="Kas A."/>
            <person name="Larbig K."/>
            <person name="Lim R.M."/>
            <person name="Smith K.A."/>
            <person name="Spencer D.H."/>
            <person name="Wong G.K.-S."/>
            <person name="Wu Z."/>
            <person name="Paulsen I.T."/>
            <person name="Reizer J."/>
            <person name="Saier M.H. Jr."/>
            <person name="Hancock R.E.W."/>
            <person name="Lory S."/>
            <person name="Olson M.V."/>
        </authorList>
    </citation>
    <scope>NUCLEOTIDE SEQUENCE [LARGE SCALE GENOMIC DNA]</scope>
    <source>
        <strain>ATCC 15692 / DSM 22644 / CIP 104116 / JCM 14847 / LMG 12228 / 1C / PRS 101 / PAO1</strain>
    </source>
</reference>